<accession>Q8C4Q6</accession>
<accession>Q3U6V0</accession>
<accession>Q3UP85</accession>
<accession>Q6NXY2</accession>
<accession>Q6PG77</accession>
<accession>Q78W09</accession>
<accession>Q99K80</accession>
<proteinExistence type="evidence at protein level"/>
<dbReference type="EMBL" id="AK027971">
    <property type="protein sequence ID" value="BAC25682.1"/>
    <property type="molecule type" value="mRNA"/>
</dbReference>
<dbReference type="EMBL" id="AK081494">
    <property type="protein sequence ID" value="BAC38234.1"/>
    <property type="molecule type" value="mRNA"/>
</dbReference>
<dbReference type="EMBL" id="AK143716">
    <property type="protein sequence ID" value="BAE25512.1"/>
    <property type="molecule type" value="mRNA"/>
</dbReference>
<dbReference type="EMBL" id="AK149788">
    <property type="protein sequence ID" value="BAE29085.1"/>
    <property type="molecule type" value="mRNA"/>
</dbReference>
<dbReference type="EMBL" id="AK150639">
    <property type="protein sequence ID" value="BAE29727.1"/>
    <property type="molecule type" value="mRNA"/>
</dbReference>
<dbReference type="EMBL" id="AK150702">
    <property type="protein sequence ID" value="BAE29781.1"/>
    <property type="molecule type" value="mRNA"/>
</dbReference>
<dbReference type="EMBL" id="AK152961">
    <property type="protein sequence ID" value="BAE31624.1"/>
    <property type="molecule type" value="mRNA"/>
</dbReference>
<dbReference type="EMBL" id="AK153448">
    <property type="protein sequence ID" value="BAE32003.1"/>
    <property type="molecule type" value="mRNA"/>
</dbReference>
<dbReference type="EMBL" id="AK159318">
    <property type="protein sequence ID" value="BAE34985.1"/>
    <property type="molecule type" value="mRNA"/>
</dbReference>
<dbReference type="EMBL" id="AK167520">
    <property type="protein sequence ID" value="BAE39592.1"/>
    <property type="molecule type" value="mRNA"/>
</dbReference>
<dbReference type="EMBL" id="AK172451">
    <property type="protein sequence ID" value="BAE43012.1"/>
    <property type="molecule type" value="mRNA"/>
</dbReference>
<dbReference type="EMBL" id="AK158103">
    <property type="protein sequence ID" value="BAE34358.1"/>
    <property type="molecule type" value="mRNA"/>
</dbReference>
<dbReference type="EMBL" id="BC057183">
    <property type="protein sequence ID" value="AAH57183.1"/>
    <property type="molecule type" value="mRNA"/>
</dbReference>
<dbReference type="EMBL" id="BC066829">
    <property type="protein sequence ID" value="AAH66829.1"/>
    <property type="molecule type" value="mRNA"/>
</dbReference>
<dbReference type="EMBL" id="BC086763">
    <property type="protein sequence ID" value="AAH86763.1"/>
    <property type="molecule type" value="mRNA"/>
</dbReference>
<dbReference type="CCDS" id="CCDS56663.1">
    <molecule id="Q8C4Q6-1"/>
</dbReference>
<dbReference type="RefSeq" id="NP_859421.1">
    <molecule id="Q8C4Q6-1"/>
    <property type="nucleotide sequence ID" value="NM_181732.4"/>
</dbReference>
<dbReference type="PDB" id="1UG7">
    <property type="method" value="NMR"/>
    <property type="chains" value="A=1-115"/>
</dbReference>
<dbReference type="PDB" id="2QZ5">
    <property type="method" value="X-ray"/>
    <property type="resolution" value="2.60 A"/>
    <property type="chains" value="A/B=151-305"/>
</dbReference>
<dbReference type="PDBsum" id="1UG7"/>
<dbReference type="PDBsum" id="2QZ5"/>
<dbReference type="BMRB" id="Q8C4Q6"/>
<dbReference type="SMR" id="Q8C4Q6"/>
<dbReference type="BioGRID" id="224467">
    <property type="interactions" value="1"/>
</dbReference>
<dbReference type="FunCoup" id="Q8C4Q6">
    <property type="interactions" value="2002"/>
</dbReference>
<dbReference type="IntAct" id="Q8C4Q6">
    <property type="interactions" value="2"/>
</dbReference>
<dbReference type="MINT" id="Q8C4Q6"/>
<dbReference type="STRING" id="10090.ENSMUSP00000104795"/>
<dbReference type="iPTMnet" id="Q8C4Q6"/>
<dbReference type="PhosphoSitePlus" id="Q8C4Q6"/>
<dbReference type="REPRODUCTION-2DPAGE" id="Q8C4Q6"/>
<dbReference type="PaxDb" id="10090-ENSMUSP00000104795"/>
<dbReference type="PeptideAtlas" id="Q8C4Q6"/>
<dbReference type="ProteomicsDB" id="285785">
    <molecule id="Q8C4Q6-1"/>
</dbReference>
<dbReference type="ProteomicsDB" id="285786">
    <molecule id="Q8C4Q6-2"/>
</dbReference>
<dbReference type="Pumba" id="Q8C4Q6"/>
<dbReference type="Antibodypedia" id="34630">
    <property type="antibodies" value="138 antibodies from 23 providers"/>
</dbReference>
<dbReference type="DNASU" id="108909"/>
<dbReference type="Ensembl" id="ENSMUST00000109166.8">
    <molecule id="Q8C4Q6-1"/>
    <property type="protein sequence ID" value="ENSMUSP00000104795.3"/>
    <property type="gene ID" value="ENSMUSG00000042901.11"/>
</dbReference>
<dbReference type="Ensembl" id="ENSMUST00000193625.2">
    <molecule id="Q8C4Q6-2"/>
    <property type="protein sequence ID" value="ENSMUSP00000141649.2"/>
    <property type="gene ID" value="ENSMUSG00000042901.11"/>
</dbReference>
<dbReference type="GeneID" id="108909"/>
<dbReference type="KEGG" id="mmu:108909"/>
<dbReference type="UCSC" id="uc008icu.2">
    <molecule id="Q8C4Q6-1"/>
    <property type="organism name" value="mouse"/>
</dbReference>
<dbReference type="AGR" id="MGI:1919737"/>
<dbReference type="CTD" id="64853"/>
<dbReference type="MGI" id="MGI:1919737">
    <property type="gene designation" value="Aida"/>
</dbReference>
<dbReference type="VEuPathDB" id="HostDB:ENSMUSG00000042901"/>
<dbReference type="eggNOG" id="ENOG502QSD5">
    <property type="taxonomic scope" value="Eukaryota"/>
</dbReference>
<dbReference type="GeneTree" id="ENSGT00390000016465"/>
<dbReference type="HOGENOM" id="CLU_064322_0_0_1"/>
<dbReference type="InParanoid" id="Q8C4Q6"/>
<dbReference type="OMA" id="KLHAAWC"/>
<dbReference type="OrthoDB" id="428576at2759"/>
<dbReference type="PhylomeDB" id="Q8C4Q6"/>
<dbReference type="TreeFam" id="TF328541"/>
<dbReference type="BioGRID-ORCS" id="108909">
    <property type="hits" value="5 hits in 79 CRISPR screens"/>
</dbReference>
<dbReference type="ChiTaRS" id="Aida">
    <property type="organism name" value="mouse"/>
</dbReference>
<dbReference type="EvolutionaryTrace" id="Q8C4Q6"/>
<dbReference type="PRO" id="PR:Q8C4Q6"/>
<dbReference type="Proteomes" id="UP000000589">
    <property type="component" value="Chromosome 1"/>
</dbReference>
<dbReference type="RNAct" id="Q8C4Q6">
    <property type="molecule type" value="protein"/>
</dbReference>
<dbReference type="Bgee" id="ENSMUSG00000042901">
    <property type="expression patterns" value="Expressed in embryonic post-anal tail and 246 other cell types or tissues"/>
</dbReference>
<dbReference type="ExpressionAtlas" id="Q8C4Q6">
    <property type="expression patterns" value="baseline and differential"/>
</dbReference>
<dbReference type="GO" id="GO:0005737">
    <property type="term" value="C:cytoplasm"/>
    <property type="evidence" value="ECO:0000314"/>
    <property type="project" value="MGI"/>
</dbReference>
<dbReference type="GO" id="GO:0019904">
    <property type="term" value="F:protein domain specific binding"/>
    <property type="evidence" value="ECO:0000353"/>
    <property type="project" value="MGI"/>
</dbReference>
<dbReference type="GO" id="GO:0048264">
    <property type="term" value="P:determination of ventral identity"/>
    <property type="evidence" value="ECO:0000266"/>
    <property type="project" value="MGI"/>
</dbReference>
<dbReference type="GO" id="GO:0009953">
    <property type="term" value="P:dorsal/ventral pattern formation"/>
    <property type="evidence" value="ECO:0000250"/>
    <property type="project" value="UniProtKB"/>
</dbReference>
<dbReference type="GO" id="GO:2000016">
    <property type="term" value="P:negative regulation of determination of dorsal identity"/>
    <property type="evidence" value="ECO:0000266"/>
    <property type="project" value="MGI"/>
</dbReference>
<dbReference type="GO" id="GO:0046329">
    <property type="term" value="P:negative regulation of JNK cascade"/>
    <property type="evidence" value="ECO:0000315"/>
    <property type="project" value="UniProtKB"/>
</dbReference>
<dbReference type="GO" id="GO:0031333">
    <property type="term" value="P:negative regulation of protein-containing complex assembly"/>
    <property type="evidence" value="ECO:0000315"/>
    <property type="project" value="UniProtKB"/>
</dbReference>
<dbReference type="GO" id="GO:0043254">
    <property type="term" value="P:regulation of protein-containing complex assembly"/>
    <property type="evidence" value="ECO:0000315"/>
    <property type="project" value="MGI"/>
</dbReference>
<dbReference type="FunFam" id="1.20.120.360:FF:000001">
    <property type="entry name" value="Axin interactor, dorsalization-associated protein"/>
    <property type="match status" value="1"/>
</dbReference>
<dbReference type="FunFam" id="2.60.40.150:FF:000059">
    <property type="entry name" value="Axin interactor, dorsalization-associated protein"/>
    <property type="match status" value="1"/>
</dbReference>
<dbReference type="Gene3D" id="1.20.120.360">
    <property type="entry name" value="Axin interactor, dorsalization-associated protein, N-terminal domain"/>
    <property type="match status" value="1"/>
</dbReference>
<dbReference type="Gene3D" id="2.60.40.150">
    <property type="entry name" value="C2 domain"/>
    <property type="match status" value="1"/>
</dbReference>
<dbReference type="InterPro" id="IPR025939">
    <property type="entry name" value="Aida_C"/>
</dbReference>
<dbReference type="InterPro" id="IPR023421">
    <property type="entry name" value="AIDA_N"/>
</dbReference>
<dbReference type="InterPro" id="IPR036818">
    <property type="entry name" value="AIDA_N_sf"/>
</dbReference>
<dbReference type="InterPro" id="IPR035892">
    <property type="entry name" value="C2_domain_sf"/>
</dbReference>
<dbReference type="PANTHER" id="PTHR28654">
    <property type="entry name" value="AXIN INTERACTOR, DORSALIZATION-ASSOCIATED PROTEIN"/>
    <property type="match status" value="1"/>
</dbReference>
<dbReference type="PANTHER" id="PTHR28654:SF1">
    <property type="entry name" value="AXIN INTERACTOR, DORSALIZATION-ASSOCIATED PROTEIN"/>
    <property type="match status" value="1"/>
</dbReference>
<dbReference type="Pfam" id="PF14186">
    <property type="entry name" value="Aida_C2"/>
    <property type="match status" value="1"/>
</dbReference>
<dbReference type="Pfam" id="PF08910">
    <property type="entry name" value="Aida_N"/>
    <property type="match status" value="1"/>
</dbReference>
<dbReference type="SUPFAM" id="SSF109779">
    <property type="entry name" value="Domain from hypothetical 2610208m17rik protein"/>
    <property type="match status" value="1"/>
</dbReference>
<dbReference type="PROSITE" id="PS51911">
    <property type="entry name" value="C2_AIDA"/>
    <property type="match status" value="1"/>
</dbReference>
<feature type="chain" id="PRO_0000305279" description="Axin interactor, dorsalization-associated protein">
    <location>
        <begin position="1"/>
        <end position="305"/>
    </location>
</feature>
<feature type="domain" description="C2 Aida-type" evidence="3">
    <location>
        <begin position="156"/>
        <end position="303"/>
    </location>
</feature>
<feature type="region of interest" description="Disordered" evidence="4">
    <location>
        <begin position="128"/>
        <end position="150"/>
    </location>
</feature>
<feature type="region of interest" description="Axin-binding">
    <location>
        <begin position="153"/>
        <end position="220"/>
    </location>
</feature>
<feature type="coiled-coil region" evidence="2">
    <location>
        <begin position="27"/>
        <end position="62"/>
    </location>
</feature>
<feature type="compositionally biased region" description="Acidic residues" evidence="4">
    <location>
        <begin position="128"/>
        <end position="137"/>
    </location>
</feature>
<feature type="splice variant" id="VSP_028323" description="In isoform 2." evidence="6">
    <location>
        <begin position="153"/>
        <end position="234"/>
    </location>
</feature>
<feature type="sequence conflict" description="In Ref. 2; AAH66829." evidence="7" ref="2">
    <original>G</original>
    <variation>V</variation>
    <location>
        <position position="138"/>
    </location>
</feature>
<feature type="sequence conflict" description="In Ref. 1; BAE31624." evidence="7" ref="1">
    <original>R</original>
    <variation>K</variation>
    <location>
        <position position="171"/>
    </location>
</feature>
<feature type="sequence conflict" description="In Ref. 1; BAE34358." evidence="7" ref="1">
    <original>R</original>
    <variation>K</variation>
    <location>
        <position position="231"/>
    </location>
</feature>
<feature type="helix" evidence="8">
    <location>
        <begin position="4"/>
        <end position="25"/>
    </location>
</feature>
<feature type="helix" evidence="8">
    <location>
        <begin position="28"/>
        <end position="46"/>
    </location>
</feature>
<feature type="strand" evidence="8">
    <location>
        <begin position="49"/>
        <end position="51"/>
    </location>
</feature>
<feature type="helix" evidence="8">
    <location>
        <begin position="57"/>
        <end position="78"/>
    </location>
</feature>
<feature type="helix" evidence="8">
    <location>
        <begin position="89"/>
        <end position="92"/>
    </location>
</feature>
<feature type="helix" evidence="8">
    <location>
        <begin position="94"/>
        <end position="99"/>
    </location>
</feature>
<feature type="turn" evidence="8">
    <location>
        <begin position="100"/>
        <end position="103"/>
    </location>
</feature>
<feature type="strand" evidence="9">
    <location>
        <begin position="167"/>
        <end position="176"/>
    </location>
</feature>
<feature type="helix" evidence="9">
    <location>
        <begin position="180"/>
        <end position="182"/>
    </location>
</feature>
<feature type="strand" evidence="9">
    <location>
        <begin position="184"/>
        <end position="193"/>
    </location>
</feature>
<feature type="strand" evidence="9">
    <location>
        <begin position="199"/>
        <end position="201"/>
    </location>
</feature>
<feature type="strand" evidence="9">
    <location>
        <begin position="210"/>
        <end position="213"/>
    </location>
</feature>
<feature type="strand" evidence="9">
    <location>
        <begin position="216"/>
        <end position="224"/>
    </location>
</feature>
<feature type="helix" evidence="9">
    <location>
        <begin position="229"/>
        <end position="231"/>
    </location>
</feature>
<feature type="strand" evidence="9">
    <location>
        <begin position="237"/>
        <end position="246"/>
    </location>
</feature>
<feature type="turn" evidence="9">
    <location>
        <begin position="247"/>
        <end position="250"/>
    </location>
</feature>
<feature type="strand" evidence="9">
    <location>
        <begin position="251"/>
        <end position="261"/>
    </location>
</feature>
<feature type="helix" evidence="9">
    <location>
        <begin position="262"/>
        <end position="264"/>
    </location>
</feature>
<feature type="strand" evidence="9">
    <location>
        <begin position="267"/>
        <end position="272"/>
    </location>
</feature>
<feature type="strand" evidence="9">
    <location>
        <begin position="275"/>
        <end position="278"/>
    </location>
</feature>
<feature type="strand" evidence="9">
    <location>
        <begin position="291"/>
        <end position="293"/>
    </location>
</feature>
<feature type="strand" evidence="9">
    <location>
        <begin position="296"/>
        <end position="303"/>
    </location>
</feature>
<protein>
    <recommendedName>
        <fullName>Axin interactor, dorsalization-associated protein</fullName>
    </recommendedName>
    <alternativeName>
        <fullName>Axin interaction partner and dorsalization antagonist</fullName>
    </alternativeName>
</protein>
<gene>
    <name type="primary">Aida</name>
</gene>
<comment type="function">
    <text evidence="1 5">Acts as a ventralizing factor during embryogenesis (By similarity). Inhibits axin-mediated JNK activation by binding axin and disrupting axin homodimerization. This in turn antagonizes a Wnt/beta-catenin-independent dorsalization pathway activated by AXIN/JNK-signaling.</text>
</comment>
<comment type="subunit">
    <text evidence="5">Interacts with AXIN1.</text>
</comment>
<comment type="alternative products">
    <event type="alternative splicing"/>
    <isoform>
        <id>Q8C4Q6-1</id>
        <name>1</name>
        <sequence type="displayed"/>
    </isoform>
    <isoform>
        <id>Q8C4Q6-2</id>
        <name>2</name>
        <sequence type="described" ref="VSP_028323"/>
    </isoform>
</comment>
<comment type="similarity">
    <text evidence="3 7">Belongs to the AIDA family.</text>
</comment>
<organism>
    <name type="scientific">Mus musculus</name>
    <name type="common">Mouse</name>
    <dbReference type="NCBI Taxonomy" id="10090"/>
    <lineage>
        <taxon>Eukaryota</taxon>
        <taxon>Metazoa</taxon>
        <taxon>Chordata</taxon>
        <taxon>Craniata</taxon>
        <taxon>Vertebrata</taxon>
        <taxon>Euteleostomi</taxon>
        <taxon>Mammalia</taxon>
        <taxon>Eutheria</taxon>
        <taxon>Euarchontoglires</taxon>
        <taxon>Glires</taxon>
        <taxon>Rodentia</taxon>
        <taxon>Myomorpha</taxon>
        <taxon>Muroidea</taxon>
        <taxon>Muridae</taxon>
        <taxon>Murinae</taxon>
        <taxon>Mus</taxon>
        <taxon>Mus</taxon>
    </lineage>
</organism>
<evidence type="ECO:0000250" key="1"/>
<evidence type="ECO:0000255" key="2"/>
<evidence type="ECO:0000255" key="3">
    <source>
        <dbReference type="PROSITE-ProRule" id="PRU01259"/>
    </source>
</evidence>
<evidence type="ECO:0000256" key="4">
    <source>
        <dbReference type="SAM" id="MobiDB-lite"/>
    </source>
</evidence>
<evidence type="ECO:0000269" key="5">
    <source>
    </source>
</evidence>
<evidence type="ECO:0000303" key="6">
    <source>
    </source>
</evidence>
<evidence type="ECO:0000305" key="7"/>
<evidence type="ECO:0007829" key="8">
    <source>
        <dbReference type="PDB" id="1UG7"/>
    </source>
</evidence>
<evidence type="ECO:0007829" key="9">
    <source>
        <dbReference type="PDB" id="2QZ5"/>
    </source>
</evidence>
<reference key="1">
    <citation type="journal article" date="2005" name="Science">
        <title>The transcriptional landscape of the mammalian genome.</title>
        <authorList>
            <person name="Carninci P."/>
            <person name="Kasukawa T."/>
            <person name="Katayama S."/>
            <person name="Gough J."/>
            <person name="Frith M.C."/>
            <person name="Maeda N."/>
            <person name="Oyama R."/>
            <person name="Ravasi T."/>
            <person name="Lenhard B."/>
            <person name="Wells C."/>
            <person name="Kodzius R."/>
            <person name="Shimokawa K."/>
            <person name="Bajic V.B."/>
            <person name="Brenner S.E."/>
            <person name="Batalov S."/>
            <person name="Forrest A.R."/>
            <person name="Zavolan M."/>
            <person name="Davis M.J."/>
            <person name="Wilming L.G."/>
            <person name="Aidinis V."/>
            <person name="Allen J.E."/>
            <person name="Ambesi-Impiombato A."/>
            <person name="Apweiler R."/>
            <person name="Aturaliya R.N."/>
            <person name="Bailey T.L."/>
            <person name="Bansal M."/>
            <person name="Baxter L."/>
            <person name="Beisel K.W."/>
            <person name="Bersano T."/>
            <person name="Bono H."/>
            <person name="Chalk A.M."/>
            <person name="Chiu K.P."/>
            <person name="Choudhary V."/>
            <person name="Christoffels A."/>
            <person name="Clutterbuck D.R."/>
            <person name="Crowe M.L."/>
            <person name="Dalla E."/>
            <person name="Dalrymple B.P."/>
            <person name="de Bono B."/>
            <person name="Della Gatta G."/>
            <person name="di Bernardo D."/>
            <person name="Down T."/>
            <person name="Engstrom P."/>
            <person name="Fagiolini M."/>
            <person name="Faulkner G."/>
            <person name="Fletcher C.F."/>
            <person name="Fukushima T."/>
            <person name="Furuno M."/>
            <person name="Futaki S."/>
            <person name="Gariboldi M."/>
            <person name="Georgii-Hemming P."/>
            <person name="Gingeras T.R."/>
            <person name="Gojobori T."/>
            <person name="Green R.E."/>
            <person name="Gustincich S."/>
            <person name="Harbers M."/>
            <person name="Hayashi Y."/>
            <person name="Hensch T.K."/>
            <person name="Hirokawa N."/>
            <person name="Hill D."/>
            <person name="Huminiecki L."/>
            <person name="Iacono M."/>
            <person name="Ikeo K."/>
            <person name="Iwama A."/>
            <person name="Ishikawa T."/>
            <person name="Jakt M."/>
            <person name="Kanapin A."/>
            <person name="Katoh M."/>
            <person name="Kawasawa Y."/>
            <person name="Kelso J."/>
            <person name="Kitamura H."/>
            <person name="Kitano H."/>
            <person name="Kollias G."/>
            <person name="Krishnan S.P."/>
            <person name="Kruger A."/>
            <person name="Kummerfeld S.K."/>
            <person name="Kurochkin I.V."/>
            <person name="Lareau L.F."/>
            <person name="Lazarevic D."/>
            <person name="Lipovich L."/>
            <person name="Liu J."/>
            <person name="Liuni S."/>
            <person name="McWilliam S."/>
            <person name="Madan Babu M."/>
            <person name="Madera M."/>
            <person name="Marchionni L."/>
            <person name="Matsuda H."/>
            <person name="Matsuzawa S."/>
            <person name="Miki H."/>
            <person name="Mignone F."/>
            <person name="Miyake S."/>
            <person name="Morris K."/>
            <person name="Mottagui-Tabar S."/>
            <person name="Mulder N."/>
            <person name="Nakano N."/>
            <person name="Nakauchi H."/>
            <person name="Ng P."/>
            <person name="Nilsson R."/>
            <person name="Nishiguchi S."/>
            <person name="Nishikawa S."/>
            <person name="Nori F."/>
            <person name="Ohara O."/>
            <person name="Okazaki Y."/>
            <person name="Orlando V."/>
            <person name="Pang K.C."/>
            <person name="Pavan W.J."/>
            <person name="Pavesi G."/>
            <person name="Pesole G."/>
            <person name="Petrovsky N."/>
            <person name="Piazza S."/>
            <person name="Reed J."/>
            <person name="Reid J.F."/>
            <person name="Ring B.Z."/>
            <person name="Ringwald M."/>
            <person name="Rost B."/>
            <person name="Ruan Y."/>
            <person name="Salzberg S.L."/>
            <person name="Sandelin A."/>
            <person name="Schneider C."/>
            <person name="Schoenbach C."/>
            <person name="Sekiguchi K."/>
            <person name="Semple C.A."/>
            <person name="Seno S."/>
            <person name="Sessa L."/>
            <person name="Sheng Y."/>
            <person name="Shibata Y."/>
            <person name="Shimada H."/>
            <person name="Shimada K."/>
            <person name="Silva D."/>
            <person name="Sinclair B."/>
            <person name="Sperling S."/>
            <person name="Stupka E."/>
            <person name="Sugiura K."/>
            <person name="Sultana R."/>
            <person name="Takenaka Y."/>
            <person name="Taki K."/>
            <person name="Tammoja K."/>
            <person name="Tan S.L."/>
            <person name="Tang S."/>
            <person name="Taylor M.S."/>
            <person name="Tegner J."/>
            <person name="Teichmann S.A."/>
            <person name="Ueda H.R."/>
            <person name="van Nimwegen E."/>
            <person name="Verardo R."/>
            <person name="Wei C.L."/>
            <person name="Yagi K."/>
            <person name="Yamanishi H."/>
            <person name="Zabarovsky E."/>
            <person name="Zhu S."/>
            <person name="Zimmer A."/>
            <person name="Hide W."/>
            <person name="Bult C."/>
            <person name="Grimmond S.M."/>
            <person name="Teasdale R.D."/>
            <person name="Liu E.T."/>
            <person name="Brusic V."/>
            <person name="Quackenbush J."/>
            <person name="Wahlestedt C."/>
            <person name="Mattick J.S."/>
            <person name="Hume D.A."/>
            <person name="Kai C."/>
            <person name="Sasaki D."/>
            <person name="Tomaru Y."/>
            <person name="Fukuda S."/>
            <person name="Kanamori-Katayama M."/>
            <person name="Suzuki M."/>
            <person name="Aoki J."/>
            <person name="Arakawa T."/>
            <person name="Iida J."/>
            <person name="Imamura K."/>
            <person name="Itoh M."/>
            <person name="Kato T."/>
            <person name="Kawaji H."/>
            <person name="Kawagashira N."/>
            <person name="Kawashima T."/>
            <person name="Kojima M."/>
            <person name="Kondo S."/>
            <person name="Konno H."/>
            <person name="Nakano K."/>
            <person name="Ninomiya N."/>
            <person name="Nishio T."/>
            <person name="Okada M."/>
            <person name="Plessy C."/>
            <person name="Shibata K."/>
            <person name="Shiraki T."/>
            <person name="Suzuki S."/>
            <person name="Tagami M."/>
            <person name="Waki K."/>
            <person name="Watahiki A."/>
            <person name="Okamura-Oho Y."/>
            <person name="Suzuki H."/>
            <person name="Kawai J."/>
            <person name="Hayashizaki Y."/>
        </authorList>
    </citation>
    <scope>NUCLEOTIDE SEQUENCE [LARGE SCALE MRNA] (ISOFORM 1)</scope>
    <source>
        <strain>C57BL/6J</strain>
        <strain>NOD</strain>
        <tissue>Bone marrow</tissue>
        <tissue>Embryo</tissue>
        <tissue>Head</tissue>
        <tissue>Inner ear</tissue>
        <tissue>Placenta</tissue>
        <tissue>Spleen</tissue>
    </source>
</reference>
<reference key="2">
    <citation type="journal article" date="2004" name="Genome Res.">
        <title>The status, quality, and expansion of the NIH full-length cDNA project: the Mammalian Gene Collection (MGC).</title>
        <authorList>
            <consortium name="The MGC Project Team"/>
        </authorList>
    </citation>
    <scope>NUCLEOTIDE SEQUENCE [LARGE SCALE MRNA] (ISOFORMS 1 AND 2)</scope>
    <source>
        <strain>C57BL/6J</strain>
        <strain>Czech II</strain>
        <tissue>Brain</tissue>
        <tissue>Embryonic germ cell</tissue>
        <tissue>Mammary tumor</tissue>
    </source>
</reference>
<reference key="3">
    <citation type="journal article" date="2010" name="Cell">
        <title>A tissue-specific atlas of mouse protein phosphorylation and expression.</title>
        <authorList>
            <person name="Huttlin E.L."/>
            <person name="Jedrychowski M.P."/>
            <person name="Elias J.E."/>
            <person name="Goswami T."/>
            <person name="Rad R."/>
            <person name="Beausoleil S.A."/>
            <person name="Villen J."/>
            <person name="Haas W."/>
            <person name="Sowa M.E."/>
            <person name="Gygi S.P."/>
        </authorList>
    </citation>
    <scope>IDENTIFICATION BY MASS SPECTROMETRY [LARGE SCALE ANALYSIS]</scope>
    <source>
        <tissue>Brain</tissue>
        <tissue>Lung</tissue>
        <tissue>Spleen</tissue>
    </source>
</reference>
<reference key="4">
    <citation type="submission" date="2004-08" db="PDB data bank">
        <title>Solution structure of four helical up-and-down bundle domain of the hypothetical protein 2610208m17RIK similar to the protein FLJ12806.</title>
        <authorList>
            <consortium name="RIKEN structural genomics initiative (RSGI)"/>
        </authorList>
    </citation>
    <scope>STRUCTURE BY NMR OF 1-115</scope>
</reference>
<reference key="5">
    <citation type="journal article" date="2007" name="Dev. Cell">
        <title>A beta-catenin-independent dorsalization pathway activated by Axin/JNK signaling and antagonized by aida.</title>
        <authorList>
            <person name="Rui Y."/>
            <person name="Xu Z."/>
            <person name="Xiong B."/>
            <person name="Cao Y."/>
            <person name="Lin S."/>
            <person name="Zhang M."/>
            <person name="Chan S.-C."/>
            <person name="Luo W."/>
            <person name="Han Y."/>
            <person name="Lu Z."/>
            <person name="Ye Z."/>
            <person name="Zhou H.-M."/>
            <person name="Han J."/>
            <person name="Meng A."/>
            <person name="Lin S.-C."/>
        </authorList>
    </citation>
    <scope>FUNCTION</scope>
    <scope>INTERACTION WITH AXIN</scope>
</reference>
<name>AIDA_MOUSE</name>
<keyword id="KW-0002">3D-structure</keyword>
<keyword id="KW-0025">Alternative splicing</keyword>
<keyword id="KW-0175">Coiled coil</keyword>
<keyword id="KW-0217">Developmental protein</keyword>
<keyword id="KW-1185">Reference proteome</keyword>
<sequence>MSEVTRSLLQRWGASLRRGADFDSWGQLVEAIDEYQILARHLQKEAQAQHNNSEFTEEQKKTIGKIATCLELRSAALQSTQSQEEFKLEDLKKLEPILKNILTYNKEFPFDVQPIPLRRILAPGEEENLEFEEDEEGGAGAGPPDSFSARVPGTLLPRLPSEPGMTLLTIRIEKIGLKDAGQCIDPYITVSVKDLNGIDLTPVQDTPVASRKEDTYVHFNVDIELQKHVERLTKGAAIFFEFKHYKPKKRFTSTKCFAFMEMDEIKPGPIVIELYKKPTDFKRKKLQLLTKKPLYLHLHQSLHKE</sequence>